<dbReference type="EC" id="4.2.1.134" evidence="2"/>
<dbReference type="EMBL" id="CR860471">
    <property type="protein sequence ID" value="CAH92593.1"/>
    <property type="molecule type" value="mRNA"/>
</dbReference>
<dbReference type="EMBL" id="CR925958">
    <property type="protein sequence ID" value="CAI29611.1"/>
    <property type="molecule type" value="mRNA"/>
</dbReference>
<dbReference type="RefSeq" id="NP_001127566.1">
    <property type="nucleotide sequence ID" value="NM_001134094.1"/>
</dbReference>
<dbReference type="SMR" id="Q5NVQ2"/>
<dbReference type="STRING" id="9601.ENSPPYP00000007450"/>
<dbReference type="GeneID" id="100174644"/>
<dbReference type="KEGG" id="pon:100174644"/>
<dbReference type="CTD" id="51495"/>
<dbReference type="eggNOG" id="KOG3187">
    <property type="taxonomic scope" value="Eukaryota"/>
</dbReference>
<dbReference type="HOGENOM" id="CLU_046712_0_0_1"/>
<dbReference type="InParanoid" id="Q5NVQ2"/>
<dbReference type="OrthoDB" id="2157530at2759"/>
<dbReference type="TreeFam" id="TF313326"/>
<dbReference type="UniPathway" id="UPA00094"/>
<dbReference type="Proteomes" id="UP000001595">
    <property type="component" value="Unplaced"/>
</dbReference>
<dbReference type="GO" id="GO:0005783">
    <property type="term" value="C:endoplasmic reticulum"/>
    <property type="evidence" value="ECO:0000250"/>
    <property type="project" value="UniProtKB"/>
</dbReference>
<dbReference type="GO" id="GO:0005789">
    <property type="term" value="C:endoplasmic reticulum membrane"/>
    <property type="evidence" value="ECO:0007669"/>
    <property type="project" value="UniProtKB-SubCell"/>
</dbReference>
<dbReference type="GO" id="GO:0019899">
    <property type="term" value="F:enzyme binding"/>
    <property type="evidence" value="ECO:0000250"/>
    <property type="project" value="UniProtKB"/>
</dbReference>
<dbReference type="GO" id="GO:0102158">
    <property type="term" value="F:very-long-chain (3R)-3-hydroxyacyl-CoA dehydratase activity"/>
    <property type="evidence" value="ECO:0000250"/>
    <property type="project" value="UniProtKB"/>
</dbReference>
<dbReference type="GO" id="GO:0030497">
    <property type="term" value="P:fatty acid elongation"/>
    <property type="evidence" value="ECO:0000250"/>
    <property type="project" value="UniProtKB"/>
</dbReference>
<dbReference type="GO" id="GO:0030148">
    <property type="term" value="P:sphingolipid biosynthetic process"/>
    <property type="evidence" value="ECO:0007669"/>
    <property type="project" value="TreeGrafter"/>
</dbReference>
<dbReference type="GO" id="GO:0042761">
    <property type="term" value="P:very long-chain fatty acid biosynthetic process"/>
    <property type="evidence" value="ECO:0000250"/>
    <property type="project" value="UniProtKB"/>
</dbReference>
<dbReference type="CDD" id="cd06465">
    <property type="entry name" value="p23_hB-ind1_like"/>
    <property type="match status" value="1"/>
</dbReference>
<dbReference type="FunFam" id="2.60.40.790:FF:000048">
    <property type="entry name" value="Very-long-chain (3R)-3-hydroxyacyl-CoA dehydratase"/>
    <property type="match status" value="1"/>
</dbReference>
<dbReference type="Gene3D" id="2.60.40.790">
    <property type="match status" value="1"/>
</dbReference>
<dbReference type="InterPro" id="IPR007052">
    <property type="entry name" value="CS_dom"/>
</dbReference>
<dbReference type="InterPro" id="IPR008978">
    <property type="entry name" value="HSP20-like_chaperone"/>
</dbReference>
<dbReference type="InterPro" id="IPR007482">
    <property type="entry name" value="Tyr_Pase-like_PTPLA"/>
</dbReference>
<dbReference type="PANTHER" id="PTHR11035">
    <property type="entry name" value="VERY-LONG-CHAIN (3R)-3-HYDROXYACYL-COA DEHYDRATASE"/>
    <property type="match status" value="1"/>
</dbReference>
<dbReference type="PANTHER" id="PTHR11035:SF20">
    <property type="entry name" value="VERY-LONG-CHAIN (3R)-3-HYDROXYACYL-COA DEHYDRATASE 3"/>
    <property type="match status" value="1"/>
</dbReference>
<dbReference type="Pfam" id="PF04387">
    <property type="entry name" value="PTPLA"/>
    <property type="match status" value="1"/>
</dbReference>
<dbReference type="SUPFAM" id="SSF49764">
    <property type="entry name" value="HSP20-like chaperones"/>
    <property type="match status" value="1"/>
</dbReference>
<dbReference type="PROSITE" id="PS51203">
    <property type="entry name" value="CS"/>
    <property type="match status" value="1"/>
</dbReference>
<protein>
    <recommendedName>
        <fullName evidence="5">Very-long-chain (3R)-3-hydroxyacyl-CoA dehydratase 3</fullName>
        <ecNumber evidence="2">4.2.1.134</ecNumber>
    </recommendedName>
    <alternativeName>
        <fullName evidence="5">3-hydroxyacyl-CoA dehydratase 3</fullName>
        <shortName evidence="5">HACD3</shortName>
    </alternativeName>
    <alternativeName>
        <fullName evidence="5">Protein-tyrosine phosphatase-like A domain-containing protein 1</fullName>
    </alternativeName>
</protein>
<reference key="1">
    <citation type="submission" date="2004-11" db="EMBL/GenBank/DDBJ databases">
        <authorList>
            <consortium name="The German cDNA consortium"/>
        </authorList>
    </citation>
    <scope>NUCLEOTIDE SEQUENCE [LARGE SCALE MRNA]</scope>
    <source>
        <tissue>Brain cortex</tissue>
    </source>
</reference>
<sequence length="364" mass="43337">MAMENQVLTPHVYWAQRHRELYLRVELSDVQNPAISTTENVLHFKAQGHGAKGDNVYEFHLEFLDLVKPEPVYKLTQRQVNITVQKKVSQWWERLTKQEKRPLFLAPDFDRWLDESDAEMELRAKEEERLNKLRLESEGSPETLTNLRKGYLFMYNLVQFLGFSWIFVNLTVRFCILGKESFYDTFHTVADMMYFCQMLAVVETINAAIGVTTSPVLPSLIQLLGRNFILFIIFGTMEEMQNKAVVFFVFYLWSAIEIFRYSFYMLTCIDMDWEVLTWLRYTLWIPLYPLGCLAEAVSVVQSIPIFNETGRFSFTLPYPVKIKVRFSFFLQIYLIMIFLGLYINFRHLYKQRRRRYGQKKKKIH</sequence>
<name>HACD3_PONAB</name>
<organism>
    <name type="scientific">Pongo abelii</name>
    <name type="common">Sumatran orangutan</name>
    <name type="synonym">Pongo pygmaeus abelii</name>
    <dbReference type="NCBI Taxonomy" id="9601"/>
    <lineage>
        <taxon>Eukaryota</taxon>
        <taxon>Metazoa</taxon>
        <taxon>Chordata</taxon>
        <taxon>Craniata</taxon>
        <taxon>Vertebrata</taxon>
        <taxon>Euteleostomi</taxon>
        <taxon>Mammalia</taxon>
        <taxon>Eutheria</taxon>
        <taxon>Euarchontoglires</taxon>
        <taxon>Primates</taxon>
        <taxon>Haplorrhini</taxon>
        <taxon>Catarrhini</taxon>
        <taxon>Hominidae</taxon>
        <taxon>Pongo</taxon>
    </lineage>
</organism>
<evidence type="ECO:0000250" key="1">
    <source>
        <dbReference type="UniProtKB" id="P40857"/>
    </source>
</evidence>
<evidence type="ECO:0000250" key="2">
    <source>
        <dbReference type="UniProtKB" id="Q9P035"/>
    </source>
</evidence>
<evidence type="ECO:0000255" key="3"/>
<evidence type="ECO:0000255" key="4">
    <source>
        <dbReference type="PROSITE-ProRule" id="PRU00547"/>
    </source>
</evidence>
<evidence type="ECO:0000305" key="5"/>
<gene>
    <name evidence="5" type="primary">HACD3</name>
    <name evidence="5" type="synonym">PTPLAD1</name>
</gene>
<comment type="function">
    <text evidence="2">Catalyzes the third of the four reactions of the long-chain fatty acids elongation cycle. This endoplasmic reticulum-bound enzymatic process, allows the addition of two carbons to the chain of long- and very long-chain fatty acids/VLCFAs per cycle. This enzyme catalyzes the dehydration of the 3-hydroxyacyl-CoA intermediate into trans-2,3-enoyl-CoA, within each cycle of fatty acid elongation. Thereby, it participates in the production of VLCFAs of different chain lengths that are involved in multiple biological processes as precursors of membrane lipids and lipid mediators. Involved in Rac1-signaling pathways leading to the modulation of gene expression.</text>
</comment>
<comment type="catalytic activity">
    <reaction evidence="2">
        <text>a very-long-chain (3R)-3-hydroxyacyl-CoA = a very-long-chain (2E)-enoyl-CoA + H2O</text>
        <dbReference type="Rhea" id="RHEA:45812"/>
        <dbReference type="ChEBI" id="CHEBI:15377"/>
        <dbReference type="ChEBI" id="CHEBI:83728"/>
        <dbReference type="ChEBI" id="CHEBI:85440"/>
        <dbReference type="EC" id="4.2.1.134"/>
    </reaction>
    <physiologicalReaction direction="left-to-right" evidence="2">
        <dbReference type="Rhea" id="RHEA:45813"/>
    </physiologicalReaction>
</comment>
<comment type="catalytic activity">
    <reaction evidence="2">
        <text>(3R)-hydroxyhexadecanoyl-CoA = (2E)-hexadecenoyl-CoA + H2O</text>
        <dbReference type="Rhea" id="RHEA:39159"/>
        <dbReference type="ChEBI" id="CHEBI:15377"/>
        <dbReference type="ChEBI" id="CHEBI:61526"/>
        <dbReference type="ChEBI" id="CHEBI:74278"/>
    </reaction>
    <physiologicalReaction direction="left-to-right" evidence="2">
        <dbReference type="Rhea" id="RHEA:39160"/>
    </physiologicalReaction>
</comment>
<comment type="pathway">
    <text evidence="2">Lipid metabolism; fatty acid biosynthesis.</text>
</comment>
<comment type="subunit">
    <text evidence="2">May interact with enzymes of the ELO family (including ELOVL1); with those enzymes that mediate condensation, the first of the four steps of the reaction cycle responsible for fatty acids elongation, may be part of a larger fatty acids elongase complex. Interacts with RAC1.</text>
</comment>
<comment type="subcellular location">
    <subcellularLocation>
        <location evidence="2">Endoplasmic reticulum membrane</location>
        <topology evidence="2">Multi-pass membrane protein</topology>
    </subcellularLocation>
</comment>
<comment type="similarity">
    <text evidence="5">Belongs to the very long-chain fatty acids dehydratase HACD family.</text>
</comment>
<comment type="caution">
    <text evidence="2">Shares some similarity with tyrosine phosphatase proteins but it has probably no phosphatase activity.</text>
</comment>
<accession>Q5NVQ2</accession>
<accession>Q5R6L7</accession>
<proteinExistence type="evidence at transcript level"/>
<feature type="chain" id="PRO_0000313726" description="Very-long-chain (3R)-3-hydroxyacyl-CoA dehydratase 3">
    <location>
        <begin position="1"/>
        <end position="364"/>
    </location>
</feature>
<feature type="topological domain" description="Cytoplasmic" evidence="3">
    <location>
        <begin position="1"/>
        <end position="151"/>
    </location>
</feature>
<feature type="transmembrane region" description="Helical" evidence="3">
    <location>
        <begin position="152"/>
        <end position="172"/>
    </location>
</feature>
<feature type="topological domain" description="Lumenal" evidence="3">
    <location>
        <begin position="173"/>
        <end position="191"/>
    </location>
</feature>
<feature type="transmembrane region" description="Helical" evidence="3">
    <location>
        <begin position="192"/>
        <end position="212"/>
    </location>
</feature>
<feature type="topological domain" description="Cytoplasmic" evidence="3">
    <location>
        <begin position="213"/>
        <end position="214"/>
    </location>
</feature>
<feature type="transmembrane region" description="Helical" evidence="3">
    <location>
        <begin position="215"/>
        <end position="235"/>
    </location>
</feature>
<feature type="topological domain" description="Lumenal" evidence="3">
    <location>
        <begin position="236"/>
        <end position="244"/>
    </location>
</feature>
<feature type="transmembrane region" description="Helical" evidence="3">
    <location>
        <begin position="245"/>
        <end position="265"/>
    </location>
</feature>
<feature type="topological domain" description="Cytoplasmic" evidence="3">
    <location>
        <begin position="266"/>
        <end position="282"/>
    </location>
</feature>
<feature type="transmembrane region" description="Helical" evidence="3">
    <location>
        <begin position="283"/>
        <end position="303"/>
    </location>
</feature>
<feature type="topological domain" description="Lumenal" evidence="3">
    <location>
        <begin position="304"/>
        <end position="324"/>
    </location>
</feature>
<feature type="transmembrane region" description="Helical" evidence="3">
    <location>
        <begin position="325"/>
        <end position="345"/>
    </location>
</feature>
<feature type="topological domain" description="Cytoplasmic" evidence="3">
    <location>
        <begin position="346"/>
        <end position="364"/>
    </location>
</feature>
<feature type="domain" description="CS" evidence="4">
    <location>
        <begin position="7"/>
        <end position="96"/>
    </location>
</feature>
<feature type="coiled-coil region" evidence="3">
    <location>
        <begin position="113"/>
        <end position="138"/>
    </location>
</feature>
<feature type="active site" evidence="1">
    <location>
        <position position="288"/>
    </location>
</feature>
<feature type="active site" evidence="1">
    <location>
        <position position="295"/>
    </location>
</feature>
<feature type="modified residue" description="Phosphothreonine" evidence="2">
    <location>
        <position position="9"/>
    </location>
</feature>
<feature type="modified residue" description="Phosphoserine" evidence="2">
    <location>
        <position position="116"/>
    </location>
</feature>
<feature type="modified residue" description="Phosphoserine" evidence="2">
    <location>
        <position position="137"/>
    </location>
</feature>
<feature type="sequence conflict" description="In Ref. 1; CAH92593." evidence="5" ref="1">
    <original>T</original>
    <variation>I</variation>
    <location>
        <position position="37"/>
    </location>
</feature>
<feature type="sequence conflict" description="In Ref. 1; CAH92593." evidence="5" ref="1">
    <original>E</original>
    <variation>K</variation>
    <location>
        <position position="274"/>
    </location>
</feature>
<feature type="sequence conflict" description="In Ref. 1; CAH92593." evidence="5" ref="1">
    <original>V</original>
    <variation>I</variation>
    <location>
        <position position="300"/>
    </location>
</feature>
<keyword id="KW-0175">Coiled coil</keyword>
<keyword id="KW-0256">Endoplasmic reticulum</keyword>
<keyword id="KW-0275">Fatty acid biosynthesis</keyword>
<keyword id="KW-0276">Fatty acid metabolism</keyword>
<keyword id="KW-0444">Lipid biosynthesis</keyword>
<keyword id="KW-0443">Lipid metabolism</keyword>
<keyword id="KW-0456">Lyase</keyword>
<keyword id="KW-0472">Membrane</keyword>
<keyword id="KW-0597">Phosphoprotein</keyword>
<keyword id="KW-1185">Reference proteome</keyword>
<keyword id="KW-0812">Transmembrane</keyword>
<keyword id="KW-1133">Transmembrane helix</keyword>